<gene>
    <name evidence="1" type="primary">leuC</name>
    <name type="ordered locus">BAA_1489</name>
</gene>
<feature type="chain" id="PRO_1000149350" description="3-isopropylmalate dehydratase large subunit">
    <location>
        <begin position="1"/>
        <end position="464"/>
    </location>
</feature>
<feature type="binding site" evidence="1">
    <location>
        <position position="337"/>
    </location>
    <ligand>
        <name>[4Fe-4S] cluster</name>
        <dbReference type="ChEBI" id="CHEBI:49883"/>
    </ligand>
</feature>
<feature type="binding site" evidence="1">
    <location>
        <position position="397"/>
    </location>
    <ligand>
        <name>[4Fe-4S] cluster</name>
        <dbReference type="ChEBI" id="CHEBI:49883"/>
    </ligand>
</feature>
<feature type="binding site" evidence="1">
    <location>
        <position position="400"/>
    </location>
    <ligand>
        <name>[4Fe-4S] cluster</name>
        <dbReference type="ChEBI" id="CHEBI:49883"/>
    </ligand>
</feature>
<organism>
    <name type="scientific">Bacillus anthracis (strain A0248)</name>
    <dbReference type="NCBI Taxonomy" id="592021"/>
    <lineage>
        <taxon>Bacteria</taxon>
        <taxon>Bacillati</taxon>
        <taxon>Bacillota</taxon>
        <taxon>Bacilli</taxon>
        <taxon>Bacillales</taxon>
        <taxon>Bacillaceae</taxon>
        <taxon>Bacillus</taxon>
        <taxon>Bacillus cereus group</taxon>
    </lineage>
</organism>
<proteinExistence type="inferred from homology"/>
<reference key="1">
    <citation type="submission" date="2009-04" db="EMBL/GenBank/DDBJ databases">
        <title>Genome sequence of Bacillus anthracis A0248.</title>
        <authorList>
            <person name="Dodson R.J."/>
            <person name="Munk A.C."/>
            <person name="Bruce D."/>
            <person name="Detter C."/>
            <person name="Tapia R."/>
            <person name="Sutton G."/>
            <person name="Sims D."/>
            <person name="Brettin T."/>
        </authorList>
    </citation>
    <scope>NUCLEOTIDE SEQUENCE [LARGE SCALE GENOMIC DNA]</scope>
    <source>
        <strain>A0248</strain>
    </source>
</reference>
<name>LEUC_BACAA</name>
<accession>C3P4Z8</accession>
<protein>
    <recommendedName>
        <fullName evidence="1">3-isopropylmalate dehydratase large subunit</fullName>
        <ecNumber evidence="1">4.2.1.33</ecNumber>
    </recommendedName>
    <alternativeName>
        <fullName evidence="1">Alpha-IPM isomerase</fullName>
        <shortName evidence="1">IPMI</shortName>
    </alternativeName>
    <alternativeName>
        <fullName evidence="1">Isopropylmalate isomerase</fullName>
    </alternativeName>
</protein>
<sequence>MGKRLLDKLWERHVVTTNENGLDLLYIDLHLVHEVTSPQAFEGLRLTNRTVRRPDLTFATMDHNIPTKDVWNITDRIAKQQLDTLRENCKQFQVPLADIGDEEQGIVHVIGPELGLTQPGKTIVCGDSHTATHGAFGALAFGIGTSEVEHVLATQTLWQRKPKAMGIELKGKLQKGVYAKDIILHLLSKYGVAVGTGYVMEFYGETIGTMEMEERMTLCNMAIEGGAKAGIIAPDEKTFAYVKGRKYAPRDYETFEKKWFELYTDADAIYDLHISIDVTDLAPYVTWGTNPSMGVRIDEKLPEKHDVNDERAFSYMGLIPGQSTYDIPVQHVFIGSCTNSRLSDLEIAASVVKGRKVKEGVRALVVPGSKRVRDAAMQKGLHHIFEEAGFEWREPGCSMCLGMNPDQVPEGEHCASTSNRNFEGRQGKGARTHLVSPAMAAAAALYGHFVDIRKESYDGAISYS</sequence>
<keyword id="KW-0004">4Fe-4S</keyword>
<keyword id="KW-0028">Amino-acid biosynthesis</keyword>
<keyword id="KW-0100">Branched-chain amino acid biosynthesis</keyword>
<keyword id="KW-0408">Iron</keyword>
<keyword id="KW-0411">Iron-sulfur</keyword>
<keyword id="KW-0432">Leucine biosynthesis</keyword>
<keyword id="KW-0456">Lyase</keyword>
<keyword id="KW-0479">Metal-binding</keyword>
<dbReference type="EC" id="4.2.1.33" evidence="1"/>
<dbReference type="EMBL" id="CP001598">
    <property type="protein sequence ID" value="ACQ47586.1"/>
    <property type="molecule type" value="Genomic_DNA"/>
</dbReference>
<dbReference type="RefSeq" id="WP_000520131.1">
    <property type="nucleotide sequence ID" value="NC_012659.1"/>
</dbReference>
<dbReference type="SMR" id="C3P4Z8"/>
<dbReference type="GeneID" id="45021401"/>
<dbReference type="KEGG" id="bai:BAA_1489"/>
<dbReference type="HOGENOM" id="CLU_006714_3_4_9"/>
<dbReference type="UniPathway" id="UPA00048">
    <property type="reaction ID" value="UER00071"/>
</dbReference>
<dbReference type="GO" id="GO:0003861">
    <property type="term" value="F:3-isopropylmalate dehydratase activity"/>
    <property type="evidence" value="ECO:0007669"/>
    <property type="project" value="UniProtKB-UniRule"/>
</dbReference>
<dbReference type="GO" id="GO:0051539">
    <property type="term" value="F:4 iron, 4 sulfur cluster binding"/>
    <property type="evidence" value="ECO:0007669"/>
    <property type="project" value="UniProtKB-KW"/>
</dbReference>
<dbReference type="GO" id="GO:0046872">
    <property type="term" value="F:metal ion binding"/>
    <property type="evidence" value="ECO:0007669"/>
    <property type="project" value="UniProtKB-KW"/>
</dbReference>
<dbReference type="GO" id="GO:0009098">
    <property type="term" value="P:L-leucine biosynthetic process"/>
    <property type="evidence" value="ECO:0007669"/>
    <property type="project" value="UniProtKB-UniRule"/>
</dbReference>
<dbReference type="CDD" id="cd01583">
    <property type="entry name" value="IPMI"/>
    <property type="match status" value="1"/>
</dbReference>
<dbReference type="FunFam" id="3.30.499.10:FF:000007">
    <property type="entry name" value="3-isopropylmalate dehydratase large subunit"/>
    <property type="match status" value="1"/>
</dbReference>
<dbReference type="Gene3D" id="3.30.499.10">
    <property type="entry name" value="Aconitase, domain 3"/>
    <property type="match status" value="2"/>
</dbReference>
<dbReference type="HAMAP" id="MF_01026">
    <property type="entry name" value="LeuC_type1"/>
    <property type="match status" value="1"/>
</dbReference>
<dbReference type="InterPro" id="IPR004430">
    <property type="entry name" value="3-IsopropMal_deHydase_lsu"/>
</dbReference>
<dbReference type="InterPro" id="IPR015931">
    <property type="entry name" value="Acnase/IPM_dHydase_lsu_aba_1/3"/>
</dbReference>
<dbReference type="InterPro" id="IPR001030">
    <property type="entry name" value="Acoase/IPM_deHydtase_lsu_aba"/>
</dbReference>
<dbReference type="InterPro" id="IPR018136">
    <property type="entry name" value="Aconitase_4Fe-4S_BS"/>
</dbReference>
<dbReference type="InterPro" id="IPR036008">
    <property type="entry name" value="Aconitase_4Fe-4S_dom"/>
</dbReference>
<dbReference type="InterPro" id="IPR050067">
    <property type="entry name" value="IPM_dehydratase_rel_enz"/>
</dbReference>
<dbReference type="InterPro" id="IPR033941">
    <property type="entry name" value="IPMI_cat"/>
</dbReference>
<dbReference type="NCBIfam" id="TIGR00170">
    <property type="entry name" value="leuC"/>
    <property type="match status" value="1"/>
</dbReference>
<dbReference type="NCBIfam" id="NF004016">
    <property type="entry name" value="PRK05478.1"/>
    <property type="match status" value="1"/>
</dbReference>
<dbReference type="NCBIfam" id="NF009116">
    <property type="entry name" value="PRK12466.1"/>
    <property type="match status" value="1"/>
</dbReference>
<dbReference type="PANTHER" id="PTHR43822:SF9">
    <property type="entry name" value="3-ISOPROPYLMALATE DEHYDRATASE"/>
    <property type="match status" value="1"/>
</dbReference>
<dbReference type="PANTHER" id="PTHR43822">
    <property type="entry name" value="HOMOACONITASE, MITOCHONDRIAL-RELATED"/>
    <property type="match status" value="1"/>
</dbReference>
<dbReference type="Pfam" id="PF00330">
    <property type="entry name" value="Aconitase"/>
    <property type="match status" value="1"/>
</dbReference>
<dbReference type="PRINTS" id="PR00415">
    <property type="entry name" value="ACONITASE"/>
</dbReference>
<dbReference type="SUPFAM" id="SSF53732">
    <property type="entry name" value="Aconitase iron-sulfur domain"/>
    <property type="match status" value="1"/>
</dbReference>
<dbReference type="PROSITE" id="PS00450">
    <property type="entry name" value="ACONITASE_1"/>
    <property type="match status" value="1"/>
</dbReference>
<dbReference type="PROSITE" id="PS01244">
    <property type="entry name" value="ACONITASE_2"/>
    <property type="match status" value="1"/>
</dbReference>
<evidence type="ECO:0000255" key="1">
    <source>
        <dbReference type="HAMAP-Rule" id="MF_01026"/>
    </source>
</evidence>
<comment type="function">
    <text evidence="1">Catalyzes the isomerization between 2-isopropylmalate and 3-isopropylmalate, via the formation of 2-isopropylmaleate.</text>
</comment>
<comment type="catalytic activity">
    <reaction evidence="1">
        <text>(2R,3S)-3-isopropylmalate = (2S)-2-isopropylmalate</text>
        <dbReference type="Rhea" id="RHEA:32287"/>
        <dbReference type="ChEBI" id="CHEBI:1178"/>
        <dbReference type="ChEBI" id="CHEBI:35121"/>
        <dbReference type="EC" id="4.2.1.33"/>
    </reaction>
</comment>
<comment type="cofactor">
    <cofactor evidence="1">
        <name>[4Fe-4S] cluster</name>
        <dbReference type="ChEBI" id="CHEBI:49883"/>
    </cofactor>
    <text evidence="1">Binds 1 [4Fe-4S] cluster per subunit.</text>
</comment>
<comment type="pathway">
    <text evidence="1">Amino-acid biosynthesis; L-leucine biosynthesis; L-leucine from 3-methyl-2-oxobutanoate: step 2/4.</text>
</comment>
<comment type="subunit">
    <text evidence="1">Heterodimer of LeuC and LeuD.</text>
</comment>
<comment type="similarity">
    <text evidence="1">Belongs to the aconitase/IPM isomerase family. LeuC type 1 subfamily.</text>
</comment>